<feature type="signal peptide" evidence="1">
    <location>
        <begin position="1"/>
        <end position="32"/>
    </location>
</feature>
<feature type="peptide" id="PRO_0000001927" description="Peptide B">
    <location>
        <begin position="33"/>
        <end position="54"/>
    </location>
</feature>
<feature type="peptide" id="PRO_0000001928" description="Sensorin-A">
    <location>
        <begin position="46"/>
        <end position="54"/>
    </location>
</feature>
<feature type="propeptide" id="PRO_0000001929">
    <location>
        <begin position="58"/>
        <end position="113"/>
    </location>
</feature>
<feature type="domain" description="EF-hand" evidence="2">
    <location>
        <begin position="87"/>
        <end position="113"/>
    </location>
</feature>
<feature type="binding site" evidence="2">
    <location>
        <position position="100"/>
    </location>
    <ligand>
        <name>Ca(2+)</name>
        <dbReference type="ChEBI" id="CHEBI:29108"/>
    </ligand>
</feature>
<feature type="binding site" evidence="2">
    <location>
        <position position="102"/>
    </location>
    <ligand>
        <name>Ca(2+)</name>
        <dbReference type="ChEBI" id="CHEBI:29108"/>
    </ligand>
</feature>
<feature type="binding site" evidence="2">
    <location>
        <position position="104"/>
    </location>
    <ligand>
        <name>Ca(2+)</name>
        <dbReference type="ChEBI" id="CHEBI:29108"/>
    </ligand>
</feature>
<feature type="binding site" evidence="2">
    <location>
        <position position="106"/>
    </location>
    <ligand>
        <name>Ca(2+)</name>
        <dbReference type="ChEBI" id="CHEBI:29108"/>
    </ligand>
</feature>
<feature type="binding site" evidence="2">
    <location>
        <position position="111"/>
    </location>
    <ligand>
        <name>Ca(2+)</name>
        <dbReference type="ChEBI" id="CHEBI:29108"/>
    </ligand>
</feature>
<feature type="modified residue" description="Phenylalanine amide" evidence="3">
    <location>
        <position position="54"/>
    </location>
</feature>
<dbReference type="EMBL" id="X56770">
    <property type="protein sequence ID" value="CAA40089.1"/>
    <property type="molecule type" value="mRNA"/>
</dbReference>
<dbReference type="PIR" id="S23653">
    <property type="entry name" value="S23653"/>
</dbReference>
<dbReference type="RefSeq" id="NP_001191583.1">
    <property type="nucleotide sequence ID" value="NM_001204654.1"/>
</dbReference>
<dbReference type="SMR" id="P29233"/>
<dbReference type="EnsemblMetazoa" id="NM_001204654.1">
    <property type="protein sequence ID" value="NP_001191583.1"/>
    <property type="gene ID" value="GeneID_100533364"/>
</dbReference>
<dbReference type="GeneID" id="100533364"/>
<dbReference type="CTD" id="100533364"/>
<dbReference type="OrthoDB" id="6133866at2759"/>
<dbReference type="Proteomes" id="UP000694888">
    <property type="component" value="Unplaced"/>
</dbReference>
<dbReference type="GO" id="GO:0005576">
    <property type="term" value="C:extracellular region"/>
    <property type="evidence" value="ECO:0007669"/>
    <property type="project" value="UniProtKB-SubCell"/>
</dbReference>
<dbReference type="GO" id="GO:0005509">
    <property type="term" value="F:calcium ion binding"/>
    <property type="evidence" value="ECO:0007669"/>
    <property type="project" value="InterPro"/>
</dbReference>
<dbReference type="InterPro" id="IPR018247">
    <property type="entry name" value="EF_Hand_1_Ca_BS"/>
</dbReference>
<dbReference type="InterPro" id="IPR002048">
    <property type="entry name" value="EF_hand_dom"/>
</dbReference>
<dbReference type="PROSITE" id="PS50222">
    <property type="entry name" value="EF_HAND_2"/>
    <property type="match status" value="1"/>
</dbReference>
<keyword id="KW-0027">Amidation</keyword>
<keyword id="KW-0106">Calcium</keyword>
<keyword id="KW-0165">Cleavage on pair of basic residues</keyword>
<keyword id="KW-0903">Direct protein sequencing</keyword>
<keyword id="KW-0479">Metal-binding</keyword>
<keyword id="KW-0964">Secreted</keyword>
<keyword id="KW-0732">Signal</keyword>
<comment type="function">
    <text>May function as an inhibitory cotransmitter acting in conjunction with the fast excitatory transmitter released by sensory neurons. The peptide selectively inhibits certain postsynaptic cells probably by means of sensorin A release.</text>
</comment>
<comment type="subcellular location">
    <subcellularLocation>
        <location>Secreted</location>
    </subcellularLocation>
    <text>Throughout the neuronal cells (cell body, axon and presynaptic terminals).</text>
</comment>
<comment type="tissue specificity">
    <text>Seems to be specific to the mechanosensory neurons of the central nervous system.</text>
</comment>
<protein>
    <recommendedName>
        <fullName>Sensorin-A</fullName>
    </recommendedName>
    <component>
        <recommendedName>
            <fullName>Peptide B</fullName>
        </recommendedName>
    </component>
    <component>
        <recommendedName>
            <fullName>Sensorin-A</fullName>
        </recommendedName>
    </component>
</protein>
<name>SENA_APLCA</name>
<accession>P29233</accession>
<sequence length="113" mass="12711">MPSRAATSPLNVQMMVVLCIVCLALQAVAANATRSKNNVPRRFPRARYRVGYMFGKRSSSETYSTNLINLLSRQLVSQEELRAILEKQPILLDEVVKILDRNDDGYITVADLL</sequence>
<evidence type="ECO:0000255" key="1"/>
<evidence type="ECO:0000255" key="2">
    <source>
        <dbReference type="PROSITE-ProRule" id="PRU00448"/>
    </source>
</evidence>
<evidence type="ECO:0000269" key="3">
    <source>
    </source>
</evidence>
<organism>
    <name type="scientific">Aplysia californica</name>
    <name type="common">California sea hare</name>
    <dbReference type="NCBI Taxonomy" id="6500"/>
    <lineage>
        <taxon>Eukaryota</taxon>
        <taxon>Metazoa</taxon>
        <taxon>Spiralia</taxon>
        <taxon>Lophotrochozoa</taxon>
        <taxon>Mollusca</taxon>
        <taxon>Gastropoda</taxon>
        <taxon>Heterobranchia</taxon>
        <taxon>Euthyneura</taxon>
        <taxon>Tectipleura</taxon>
        <taxon>Aplysiida</taxon>
        <taxon>Aplysioidea</taxon>
        <taxon>Aplysiidae</taxon>
        <taxon>Aplysia</taxon>
    </lineage>
</organism>
<gene>
    <name type="primary">PSC1</name>
</gene>
<reference key="1">
    <citation type="journal article" date="1991" name="Science">
        <title>Identification of a peptide specific for Aplysia sensory neurons by PCR-based differential screening.</title>
        <authorList>
            <person name="Brunet J.-F."/>
            <person name="Shapiro E."/>
            <person name="Foster S.A."/>
            <person name="Kandel E.R."/>
            <person name="Iino Y."/>
        </authorList>
    </citation>
    <scope>NUCLEOTIDE SEQUENCE [MRNA]</scope>
    <scope>PROTEIN SEQUENCE OF 33-54</scope>
    <scope>AMIDATION AT PHE-54</scope>
    <source>
        <tissue>Pleural sensory cell</tissue>
    </source>
</reference>
<proteinExistence type="evidence at protein level"/>